<feature type="chain" id="PRO_1000019087" description="1-deoxy-D-xylulose-5-phosphate synthase">
    <location>
        <begin position="1"/>
        <end position="638"/>
    </location>
</feature>
<feature type="binding site" evidence="1">
    <location>
        <position position="74"/>
    </location>
    <ligand>
        <name>thiamine diphosphate</name>
        <dbReference type="ChEBI" id="CHEBI:58937"/>
    </ligand>
</feature>
<feature type="binding site" evidence="1">
    <location>
        <begin position="115"/>
        <end position="117"/>
    </location>
    <ligand>
        <name>thiamine diphosphate</name>
        <dbReference type="ChEBI" id="CHEBI:58937"/>
    </ligand>
</feature>
<feature type="binding site" evidence="1">
    <location>
        <position position="146"/>
    </location>
    <ligand>
        <name>Mg(2+)</name>
        <dbReference type="ChEBI" id="CHEBI:18420"/>
    </ligand>
</feature>
<feature type="binding site" evidence="1">
    <location>
        <begin position="147"/>
        <end position="148"/>
    </location>
    <ligand>
        <name>thiamine diphosphate</name>
        <dbReference type="ChEBI" id="CHEBI:58937"/>
    </ligand>
</feature>
<feature type="binding site" evidence="1">
    <location>
        <position position="175"/>
    </location>
    <ligand>
        <name>Mg(2+)</name>
        <dbReference type="ChEBI" id="CHEBI:18420"/>
    </ligand>
</feature>
<feature type="binding site" evidence="1">
    <location>
        <position position="175"/>
    </location>
    <ligand>
        <name>thiamine diphosphate</name>
        <dbReference type="ChEBI" id="CHEBI:58937"/>
    </ligand>
</feature>
<feature type="binding site" evidence="1">
    <location>
        <position position="286"/>
    </location>
    <ligand>
        <name>thiamine diphosphate</name>
        <dbReference type="ChEBI" id="CHEBI:58937"/>
    </ligand>
</feature>
<feature type="binding site" evidence="1">
    <location>
        <position position="366"/>
    </location>
    <ligand>
        <name>thiamine diphosphate</name>
        <dbReference type="ChEBI" id="CHEBI:58937"/>
    </ligand>
</feature>
<keyword id="KW-0414">Isoprene biosynthesis</keyword>
<keyword id="KW-0460">Magnesium</keyword>
<keyword id="KW-0479">Metal-binding</keyword>
<keyword id="KW-1185">Reference proteome</keyword>
<keyword id="KW-0784">Thiamine biosynthesis</keyword>
<keyword id="KW-0786">Thiamine pyrophosphate</keyword>
<keyword id="KW-0808">Transferase</keyword>
<accession>Q0AZE2</accession>
<protein>
    <recommendedName>
        <fullName evidence="1">1-deoxy-D-xylulose-5-phosphate synthase</fullName>
        <ecNumber evidence="1">2.2.1.7</ecNumber>
    </recommendedName>
    <alternativeName>
        <fullName evidence="1">1-deoxyxylulose-5-phosphate synthase</fullName>
        <shortName evidence="1">DXP synthase</shortName>
        <shortName evidence="1">DXPS</shortName>
    </alternativeName>
</protein>
<proteinExistence type="inferred from homology"/>
<comment type="function">
    <text evidence="1">Catalyzes the acyloin condensation reaction between C atoms 2 and 3 of pyruvate and glyceraldehyde 3-phosphate to yield 1-deoxy-D-xylulose-5-phosphate (DXP).</text>
</comment>
<comment type="catalytic activity">
    <reaction evidence="1">
        <text>D-glyceraldehyde 3-phosphate + pyruvate + H(+) = 1-deoxy-D-xylulose 5-phosphate + CO2</text>
        <dbReference type="Rhea" id="RHEA:12605"/>
        <dbReference type="ChEBI" id="CHEBI:15361"/>
        <dbReference type="ChEBI" id="CHEBI:15378"/>
        <dbReference type="ChEBI" id="CHEBI:16526"/>
        <dbReference type="ChEBI" id="CHEBI:57792"/>
        <dbReference type="ChEBI" id="CHEBI:59776"/>
        <dbReference type="EC" id="2.2.1.7"/>
    </reaction>
</comment>
<comment type="cofactor">
    <cofactor evidence="1">
        <name>Mg(2+)</name>
        <dbReference type="ChEBI" id="CHEBI:18420"/>
    </cofactor>
    <text evidence="1">Binds 1 Mg(2+) ion per subunit.</text>
</comment>
<comment type="cofactor">
    <cofactor evidence="1">
        <name>thiamine diphosphate</name>
        <dbReference type="ChEBI" id="CHEBI:58937"/>
    </cofactor>
    <text evidence="1">Binds 1 thiamine pyrophosphate per subunit.</text>
</comment>
<comment type="pathway">
    <text evidence="1">Metabolic intermediate biosynthesis; 1-deoxy-D-xylulose 5-phosphate biosynthesis; 1-deoxy-D-xylulose 5-phosphate from D-glyceraldehyde 3-phosphate and pyruvate: step 1/1.</text>
</comment>
<comment type="subunit">
    <text evidence="1">Homodimer.</text>
</comment>
<comment type="similarity">
    <text evidence="1">Belongs to the transketolase family. DXPS subfamily.</text>
</comment>
<reference key="1">
    <citation type="journal article" date="2010" name="Environ. Microbiol.">
        <title>The genome of Syntrophomonas wolfei: new insights into syntrophic metabolism and biohydrogen production.</title>
        <authorList>
            <person name="Sieber J.R."/>
            <person name="Sims D.R."/>
            <person name="Han C."/>
            <person name="Kim E."/>
            <person name="Lykidis A."/>
            <person name="Lapidus A.L."/>
            <person name="McDonnald E."/>
            <person name="Rohlin L."/>
            <person name="Culley D.E."/>
            <person name="Gunsalus R."/>
            <person name="McInerney M.J."/>
        </authorList>
    </citation>
    <scope>NUCLEOTIDE SEQUENCE [LARGE SCALE GENOMIC DNA]</scope>
    <source>
        <strain>DSM 2245B / Goettingen</strain>
    </source>
</reference>
<organism>
    <name type="scientific">Syntrophomonas wolfei subsp. wolfei (strain DSM 2245B / Goettingen)</name>
    <dbReference type="NCBI Taxonomy" id="335541"/>
    <lineage>
        <taxon>Bacteria</taxon>
        <taxon>Bacillati</taxon>
        <taxon>Bacillota</taxon>
        <taxon>Clostridia</taxon>
        <taxon>Eubacteriales</taxon>
        <taxon>Syntrophomonadaceae</taxon>
        <taxon>Syntrophomonas</taxon>
    </lineage>
</organism>
<dbReference type="EC" id="2.2.1.7" evidence="1"/>
<dbReference type="EMBL" id="CP000448">
    <property type="protein sequence ID" value="ABI67912.1"/>
    <property type="molecule type" value="Genomic_DNA"/>
</dbReference>
<dbReference type="RefSeq" id="WP_011640017.1">
    <property type="nucleotide sequence ID" value="NC_008346.1"/>
</dbReference>
<dbReference type="SMR" id="Q0AZE2"/>
<dbReference type="STRING" id="335541.Swol_0582"/>
<dbReference type="KEGG" id="swo:Swol_0582"/>
<dbReference type="eggNOG" id="COG1154">
    <property type="taxonomic scope" value="Bacteria"/>
</dbReference>
<dbReference type="HOGENOM" id="CLU_009227_1_4_9"/>
<dbReference type="OrthoDB" id="9803371at2"/>
<dbReference type="UniPathway" id="UPA00064">
    <property type="reaction ID" value="UER00091"/>
</dbReference>
<dbReference type="Proteomes" id="UP000001968">
    <property type="component" value="Chromosome"/>
</dbReference>
<dbReference type="GO" id="GO:0005829">
    <property type="term" value="C:cytosol"/>
    <property type="evidence" value="ECO:0007669"/>
    <property type="project" value="TreeGrafter"/>
</dbReference>
<dbReference type="GO" id="GO:0008661">
    <property type="term" value="F:1-deoxy-D-xylulose-5-phosphate synthase activity"/>
    <property type="evidence" value="ECO:0007669"/>
    <property type="project" value="UniProtKB-UniRule"/>
</dbReference>
<dbReference type="GO" id="GO:0000287">
    <property type="term" value="F:magnesium ion binding"/>
    <property type="evidence" value="ECO:0007669"/>
    <property type="project" value="UniProtKB-UniRule"/>
</dbReference>
<dbReference type="GO" id="GO:0030976">
    <property type="term" value="F:thiamine pyrophosphate binding"/>
    <property type="evidence" value="ECO:0007669"/>
    <property type="project" value="UniProtKB-UniRule"/>
</dbReference>
<dbReference type="GO" id="GO:0052865">
    <property type="term" value="P:1-deoxy-D-xylulose 5-phosphate biosynthetic process"/>
    <property type="evidence" value="ECO:0007669"/>
    <property type="project" value="UniProtKB-UniPathway"/>
</dbReference>
<dbReference type="GO" id="GO:0019288">
    <property type="term" value="P:isopentenyl diphosphate biosynthetic process, methylerythritol 4-phosphate pathway"/>
    <property type="evidence" value="ECO:0007669"/>
    <property type="project" value="TreeGrafter"/>
</dbReference>
<dbReference type="GO" id="GO:0016114">
    <property type="term" value="P:terpenoid biosynthetic process"/>
    <property type="evidence" value="ECO:0007669"/>
    <property type="project" value="UniProtKB-UniRule"/>
</dbReference>
<dbReference type="GO" id="GO:0009228">
    <property type="term" value="P:thiamine biosynthetic process"/>
    <property type="evidence" value="ECO:0007669"/>
    <property type="project" value="UniProtKB-UniRule"/>
</dbReference>
<dbReference type="CDD" id="cd02007">
    <property type="entry name" value="TPP_DXS"/>
    <property type="match status" value="1"/>
</dbReference>
<dbReference type="CDD" id="cd07033">
    <property type="entry name" value="TPP_PYR_DXS_TK_like"/>
    <property type="match status" value="1"/>
</dbReference>
<dbReference type="FunFam" id="3.40.50.970:FF:000005">
    <property type="entry name" value="1-deoxy-D-xylulose-5-phosphate synthase"/>
    <property type="match status" value="1"/>
</dbReference>
<dbReference type="Gene3D" id="3.40.50.920">
    <property type="match status" value="1"/>
</dbReference>
<dbReference type="Gene3D" id="3.40.50.970">
    <property type="match status" value="2"/>
</dbReference>
<dbReference type="HAMAP" id="MF_00315">
    <property type="entry name" value="DXP_synth"/>
    <property type="match status" value="1"/>
</dbReference>
<dbReference type="InterPro" id="IPR005477">
    <property type="entry name" value="Dxylulose-5-P_synthase"/>
</dbReference>
<dbReference type="InterPro" id="IPR029061">
    <property type="entry name" value="THDP-binding"/>
</dbReference>
<dbReference type="InterPro" id="IPR009014">
    <property type="entry name" value="Transketo_C/PFOR_II"/>
</dbReference>
<dbReference type="InterPro" id="IPR005475">
    <property type="entry name" value="Transketolase-like_Pyr-bd"/>
</dbReference>
<dbReference type="InterPro" id="IPR020826">
    <property type="entry name" value="Transketolase_BS"/>
</dbReference>
<dbReference type="InterPro" id="IPR033248">
    <property type="entry name" value="Transketolase_C"/>
</dbReference>
<dbReference type="InterPro" id="IPR049557">
    <property type="entry name" value="Transketolase_CS"/>
</dbReference>
<dbReference type="NCBIfam" id="TIGR00204">
    <property type="entry name" value="dxs"/>
    <property type="match status" value="1"/>
</dbReference>
<dbReference type="NCBIfam" id="NF003933">
    <property type="entry name" value="PRK05444.2-2"/>
    <property type="match status" value="1"/>
</dbReference>
<dbReference type="PANTHER" id="PTHR43322">
    <property type="entry name" value="1-D-DEOXYXYLULOSE 5-PHOSPHATE SYNTHASE-RELATED"/>
    <property type="match status" value="1"/>
</dbReference>
<dbReference type="PANTHER" id="PTHR43322:SF5">
    <property type="entry name" value="1-DEOXY-D-XYLULOSE-5-PHOSPHATE SYNTHASE, CHLOROPLASTIC"/>
    <property type="match status" value="1"/>
</dbReference>
<dbReference type="Pfam" id="PF13292">
    <property type="entry name" value="DXP_synthase_N"/>
    <property type="match status" value="1"/>
</dbReference>
<dbReference type="Pfam" id="PF02779">
    <property type="entry name" value="Transket_pyr"/>
    <property type="match status" value="1"/>
</dbReference>
<dbReference type="Pfam" id="PF02780">
    <property type="entry name" value="Transketolase_C"/>
    <property type="match status" value="1"/>
</dbReference>
<dbReference type="SMART" id="SM00861">
    <property type="entry name" value="Transket_pyr"/>
    <property type="match status" value="1"/>
</dbReference>
<dbReference type="SUPFAM" id="SSF52518">
    <property type="entry name" value="Thiamin diphosphate-binding fold (THDP-binding)"/>
    <property type="match status" value="2"/>
</dbReference>
<dbReference type="SUPFAM" id="SSF52922">
    <property type="entry name" value="TK C-terminal domain-like"/>
    <property type="match status" value="1"/>
</dbReference>
<dbReference type="PROSITE" id="PS00801">
    <property type="entry name" value="TRANSKETOLASE_1"/>
    <property type="match status" value="1"/>
</dbReference>
<dbReference type="PROSITE" id="PS00802">
    <property type="entry name" value="TRANSKETOLASE_2"/>
    <property type="match status" value="1"/>
</dbReference>
<name>DXS_SYNWW</name>
<evidence type="ECO:0000255" key="1">
    <source>
        <dbReference type="HAMAP-Rule" id="MF_00315"/>
    </source>
</evidence>
<gene>
    <name evidence="1" type="primary">dxs</name>
    <name type="ordered locus">Swol_0582</name>
</gene>
<sequence length="638" mass="69493">MDEILNTINSPRDLKKLSLPEMTQLANEIRQLLVKSVAKCGGHLASNLGVVELSLALHTVFDSPEDKIIWDVGHQAYVHKILTGRREQMSTLRQYGGISGFPKVEESEYDAFNTGHSSTSISAALGMALARDLQGQSNSVVAVIGDGALTAGMAFEALNHAGQEDSDLIVVLNDNEMSISKNVGAMSAYLNRLRTDPSYSRTKEEIESVLNRIPGIGPNLARAAGKFKDTVKYLMVPGIIFEELGFTYIGPVNGHDLAELKAVLSNIKKMKGPILLHTITQKGKGYEPAFQKPDIFHGVGPFDVDTGTQLKKSLKTYTEIFGDFMLNQAQRDNKLVAITAAMTSGTGLSEFSRNFPERFFDVGICEQHAVTLAAGMASSGLRPVVAVYSTFLQRAYDQIVHDVALQKLPVIFAIDRAGLVGEDGPTHHGAFDFSYLRHIPNLIIMAPADENELVDMLHSAFSMEGPVAIRYPRGVGEGVRIKSERQLLEPGQSRLIAEGQDLAIIAVGRGVSIARDVVDLLAGKGVNPLLVDARFVKPLDRRVIAGAAQKYHRLLTIEDNSLAGGFGSAIGEMLVEEGIDAELLHIALPDEFVEHGRVELLFEQLNMNPDSILESIAGKWPELFSAGSRWELLKFGQN</sequence>